<dbReference type="EMBL" id="AB121205">
    <property type="protein sequence ID" value="BAD13412.1"/>
    <property type="molecule type" value="mRNA"/>
</dbReference>
<dbReference type="ArachnoServer" id="AS000365">
    <property type="toxin name" value="U14-hexatoxin-Mg1a"/>
</dbReference>
<dbReference type="GO" id="GO:0005576">
    <property type="term" value="C:extracellular region"/>
    <property type="evidence" value="ECO:0007669"/>
    <property type="project" value="UniProtKB-SubCell"/>
</dbReference>
<protein>
    <recommendedName>
        <fullName>U14-hexatoxin-Mg1a</fullName>
        <shortName>U14-HXTX-Mg1a</shortName>
    </recommendedName>
    <alternativeName>
        <fullName>Neurotoxin magi-13</fullName>
    </alternativeName>
</protein>
<keyword id="KW-1015">Disulfide bond</keyword>
<keyword id="KW-0964">Secreted</keyword>
<keyword id="KW-0732">Signal</keyword>
<organism>
    <name type="scientific">Macrothele gigas</name>
    <name type="common">Japanese funnel web spider</name>
    <dbReference type="NCBI Taxonomy" id="223896"/>
    <lineage>
        <taxon>Eukaryota</taxon>
        <taxon>Metazoa</taxon>
        <taxon>Ecdysozoa</taxon>
        <taxon>Arthropoda</taxon>
        <taxon>Chelicerata</taxon>
        <taxon>Arachnida</taxon>
        <taxon>Araneae</taxon>
        <taxon>Mygalomorphae</taxon>
        <taxon>Macrothelidae</taxon>
        <taxon>Macrothele</taxon>
    </lineage>
</organism>
<sequence>MKLTLFILIVFVVLANVYAAGISERNIIGGRVIKLCGGGAQKCCDREPRCDPCRKCVQSFHSGVYMCSDKKSNCS</sequence>
<accession>Q75WG6</accession>
<feature type="signal peptide" evidence="1">
    <location>
        <begin position="1"/>
        <end position="19"/>
    </location>
</feature>
<feature type="propeptide" id="PRO_0000285713">
    <location>
        <begin position="20"/>
        <end position="31"/>
    </location>
</feature>
<feature type="chain" id="PRO_0000285714" description="U14-hexatoxin-Mg1a">
    <location>
        <begin position="32"/>
        <end position="75"/>
    </location>
</feature>
<proteinExistence type="evidence at protein level"/>
<evidence type="ECO:0000255" key="1"/>
<evidence type="ECO:0000269" key="2">
    <source>
    </source>
</evidence>
<evidence type="ECO:0000305" key="3"/>
<comment type="function">
    <text evidence="2">No toxicity is observed upon intracranial injection into mice and intrathorax injection into crickets.</text>
</comment>
<comment type="subcellular location">
    <subcellularLocation>
        <location>Secreted</location>
    </subcellularLocation>
</comment>
<comment type="tissue specificity">
    <text>Expressed by the venom gland.</text>
</comment>
<comment type="PTM">
    <text evidence="3">Contains 4 disulfide bonds.</text>
</comment>
<comment type="mass spectrometry"/>
<name>TXM13_MACGS</name>
<reference key="1">
    <citation type="journal article" date="2004" name="Toxicon">
        <title>Rapid and efficient identification of cysteine-rich peptides by random screening of a venom gland cDNA library from the hexathelid spider Macrothele gigas.</title>
        <authorList>
            <person name="Satake H."/>
            <person name="Villegas E."/>
            <person name="Oshiro N."/>
            <person name="Terada K."/>
            <person name="Shinada T."/>
            <person name="Corzo G."/>
        </authorList>
    </citation>
    <scope>NUCLEOTIDE SEQUENCE [MRNA]</scope>
    <scope>FUNCTION</scope>
    <scope>MASS SPECTROMETRY</scope>
    <source>
        <tissue>Venom</tissue>
        <tissue>Venom gland</tissue>
    </source>
</reference>